<comment type="function">
    <text evidence="1">Required for disulfide bond formation in some periplasmic proteins. Acts by oxidizing the DsbA protein.</text>
</comment>
<comment type="subcellular location">
    <subcellularLocation>
        <location evidence="1">Cell inner membrane</location>
        <topology evidence="1">Multi-pass membrane protein</topology>
    </subcellularLocation>
</comment>
<comment type="similarity">
    <text evidence="1">Belongs to the DsbB family.</text>
</comment>
<gene>
    <name evidence="1" type="primary">dsbB</name>
    <name type="ordered locus">APL_0321</name>
</gene>
<keyword id="KW-0997">Cell inner membrane</keyword>
<keyword id="KW-1003">Cell membrane</keyword>
<keyword id="KW-0143">Chaperone</keyword>
<keyword id="KW-1015">Disulfide bond</keyword>
<keyword id="KW-0249">Electron transport</keyword>
<keyword id="KW-0472">Membrane</keyword>
<keyword id="KW-0560">Oxidoreductase</keyword>
<keyword id="KW-0676">Redox-active center</keyword>
<keyword id="KW-1185">Reference proteome</keyword>
<keyword id="KW-0812">Transmembrane</keyword>
<keyword id="KW-1133">Transmembrane helix</keyword>
<keyword id="KW-0813">Transport</keyword>
<accession>A3MZ39</accession>
<feature type="chain" id="PRO_0000298333" description="Disulfide bond formation protein B">
    <location>
        <begin position="1"/>
        <end position="179"/>
    </location>
</feature>
<feature type="topological domain" description="Cytoplasmic" evidence="1">
    <location>
        <begin position="1"/>
        <end position="14"/>
    </location>
</feature>
<feature type="transmembrane region" description="Helical" evidence="1">
    <location>
        <begin position="15"/>
        <end position="31"/>
    </location>
</feature>
<feature type="topological domain" description="Periplasmic" evidence="1">
    <location>
        <begin position="32"/>
        <end position="49"/>
    </location>
</feature>
<feature type="transmembrane region" description="Helical" evidence="1">
    <location>
        <begin position="50"/>
        <end position="65"/>
    </location>
</feature>
<feature type="topological domain" description="Cytoplasmic" evidence="1">
    <location>
        <begin position="66"/>
        <end position="72"/>
    </location>
</feature>
<feature type="transmembrane region" description="Helical" evidence="1">
    <location>
        <begin position="73"/>
        <end position="90"/>
    </location>
</feature>
<feature type="topological domain" description="Periplasmic" evidence="1">
    <location>
        <begin position="91"/>
        <end position="146"/>
    </location>
</feature>
<feature type="transmembrane region" description="Helical" evidence="1">
    <location>
        <begin position="147"/>
        <end position="165"/>
    </location>
</feature>
<feature type="topological domain" description="Cytoplasmic" evidence="1">
    <location>
        <begin position="166"/>
        <end position="179"/>
    </location>
</feature>
<feature type="disulfide bond" description="Redox-active" evidence="1">
    <location>
        <begin position="41"/>
        <end position="44"/>
    </location>
</feature>
<feature type="disulfide bond" description="Redox-active" evidence="1">
    <location>
        <begin position="105"/>
        <end position="132"/>
    </location>
</feature>
<reference key="1">
    <citation type="journal article" date="2008" name="J. Bacteriol.">
        <title>The complete genome sequence of Actinobacillus pleuropneumoniae L20 (serotype 5b).</title>
        <authorList>
            <person name="Foote S.J."/>
            <person name="Bosse J.T."/>
            <person name="Bouevitch A.B."/>
            <person name="Langford P.R."/>
            <person name="Young N.M."/>
            <person name="Nash J.H.E."/>
        </authorList>
    </citation>
    <scope>NUCLEOTIDE SEQUENCE [LARGE SCALE GENOMIC DNA]</scope>
    <source>
        <strain>L20</strain>
    </source>
</reference>
<dbReference type="EMBL" id="CP000569">
    <property type="protein sequence ID" value="ABN73425.1"/>
    <property type="molecule type" value="Genomic_DNA"/>
</dbReference>
<dbReference type="RefSeq" id="WP_005596251.1">
    <property type="nucleotide sequence ID" value="NC_009053.1"/>
</dbReference>
<dbReference type="SMR" id="A3MZ39"/>
<dbReference type="STRING" id="416269.APL_0321"/>
<dbReference type="EnsemblBacteria" id="ABN73425">
    <property type="protein sequence ID" value="ABN73425"/>
    <property type="gene ID" value="APL_0321"/>
</dbReference>
<dbReference type="GeneID" id="48598476"/>
<dbReference type="KEGG" id="apl:APL_0321"/>
<dbReference type="eggNOG" id="COG1495">
    <property type="taxonomic scope" value="Bacteria"/>
</dbReference>
<dbReference type="HOGENOM" id="CLU_098660_2_0_6"/>
<dbReference type="Proteomes" id="UP000001432">
    <property type="component" value="Chromosome"/>
</dbReference>
<dbReference type="GO" id="GO:0005886">
    <property type="term" value="C:plasma membrane"/>
    <property type="evidence" value="ECO:0007669"/>
    <property type="project" value="UniProtKB-SubCell"/>
</dbReference>
<dbReference type="GO" id="GO:0009055">
    <property type="term" value="F:electron transfer activity"/>
    <property type="evidence" value="ECO:0007669"/>
    <property type="project" value="UniProtKB-UniRule"/>
</dbReference>
<dbReference type="GO" id="GO:0015035">
    <property type="term" value="F:protein-disulfide reductase activity"/>
    <property type="evidence" value="ECO:0007669"/>
    <property type="project" value="UniProtKB-UniRule"/>
</dbReference>
<dbReference type="GO" id="GO:0006457">
    <property type="term" value="P:protein folding"/>
    <property type="evidence" value="ECO:0007669"/>
    <property type="project" value="InterPro"/>
</dbReference>
<dbReference type="Gene3D" id="1.20.1550.10">
    <property type="entry name" value="DsbB-like"/>
    <property type="match status" value="1"/>
</dbReference>
<dbReference type="HAMAP" id="MF_00286">
    <property type="entry name" value="DsbB"/>
    <property type="match status" value="1"/>
</dbReference>
<dbReference type="InterPro" id="IPR003752">
    <property type="entry name" value="DiS_bond_form_DsbB/BdbC"/>
</dbReference>
<dbReference type="InterPro" id="IPR022920">
    <property type="entry name" value="Disulphide_bond_form_DsbB"/>
</dbReference>
<dbReference type="InterPro" id="IPR050183">
    <property type="entry name" value="DsbB"/>
</dbReference>
<dbReference type="InterPro" id="IPR023380">
    <property type="entry name" value="DsbB-like_sf"/>
</dbReference>
<dbReference type="NCBIfam" id="NF002485">
    <property type="entry name" value="PRK01749.1"/>
    <property type="match status" value="1"/>
</dbReference>
<dbReference type="PANTHER" id="PTHR36570">
    <property type="entry name" value="DISULFIDE BOND FORMATION PROTEIN B"/>
    <property type="match status" value="1"/>
</dbReference>
<dbReference type="PANTHER" id="PTHR36570:SF2">
    <property type="entry name" value="DISULFIDE BOND FORMATION PROTEIN B"/>
    <property type="match status" value="1"/>
</dbReference>
<dbReference type="Pfam" id="PF02600">
    <property type="entry name" value="DsbB"/>
    <property type="match status" value="1"/>
</dbReference>
<dbReference type="SUPFAM" id="SSF158442">
    <property type="entry name" value="DsbB-like"/>
    <property type="match status" value="1"/>
</dbReference>
<proteinExistence type="inferred from homology"/>
<organism>
    <name type="scientific">Actinobacillus pleuropneumoniae serotype 5b (strain L20)</name>
    <dbReference type="NCBI Taxonomy" id="416269"/>
    <lineage>
        <taxon>Bacteria</taxon>
        <taxon>Pseudomonadati</taxon>
        <taxon>Pseudomonadota</taxon>
        <taxon>Gammaproteobacteria</taxon>
        <taxon>Pasteurellales</taxon>
        <taxon>Pasteurellaceae</taxon>
        <taxon>Actinobacillus</taxon>
    </lineage>
</organism>
<name>DSBB_ACTP2</name>
<protein>
    <recommendedName>
        <fullName evidence="1">Disulfide bond formation protein B</fullName>
    </recommendedName>
    <alternativeName>
        <fullName evidence="1">Disulfide oxidoreductase</fullName>
    </alternativeName>
</protein>
<sequence>MLSYFKELSLNRTAWLLLAFVAFALEASAIYFQYGMGLVPCVMCVYERLAIFGLLIAGLVGAISPRFFLTRWLALLLWGFSAFKGLALAIKHHDYQANPSPWNQCEFKPEFPQTMPFDQWFPSIFAPGPVNCSEKQWEMFGLGMPEWLILAFSIFALMFVIVLLSQFKRAKPQYRSVFR</sequence>
<evidence type="ECO:0000255" key="1">
    <source>
        <dbReference type="HAMAP-Rule" id="MF_00286"/>
    </source>
</evidence>